<name>HEMH_MARN8</name>
<proteinExistence type="inferred from homology"/>
<organism>
    <name type="scientific">Marinobacter nauticus (strain ATCC 700491 / DSM 11845 / VT8)</name>
    <name type="common">Marinobacter aquaeolei</name>
    <dbReference type="NCBI Taxonomy" id="351348"/>
    <lineage>
        <taxon>Bacteria</taxon>
        <taxon>Pseudomonadati</taxon>
        <taxon>Pseudomonadota</taxon>
        <taxon>Gammaproteobacteria</taxon>
        <taxon>Pseudomonadales</taxon>
        <taxon>Marinobacteraceae</taxon>
        <taxon>Marinobacter</taxon>
    </lineage>
</organism>
<reference key="1">
    <citation type="journal article" date="2011" name="Appl. Environ. Microbiol.">
        <title>Genomic potential of Marinobacter aquaeolei, a biogeochemical 'opportunitroph'.</title>
        <authorList>
            <person name="Singer E."/>
            <person name="Webb E.A."/>
            <person name="Nelson W.C."/>
            <person name="Heidelberg J.F."/>
            <person name="Ivanova N."/>
            <person name="Pati A."/>
            <person name="Edwards K.J."/>
        </authorList>
    </citation>
    <scope>NUCLEOTIDE SEQUENCE [LARGE SCALE GENOMIC DNA]</scope>
    <source>
        <strain>ATCC 700491 / DSM 11845 / VT8</strain>
    </source>
</reference>
<keyword id="KW-0963">Cytoplasm</keyword>
<keyword id="KW-0350">Heme biosynthesis</keyword>
<keyword id="KW-0408">Iron</keyword>
<keyword id="KW-0456">Lyase</keyword>
<keyword id="KW-0479">Metal-binding</keyword>
<keyword id="KW-0627">Porphyrin biosynthesis</keyword>
<sequence length="370" mass="42506">MPYNGIDNYRHNEPDRLGVLITNLGTPDAPTTPALRKYLAEFLWDPRVVEVPRPLWWLILHGVILRIRPRKSAEAYASVWEKDGSPLLIHTAKQAEGIREAMKQRFGTNVVVGFAMRYGNPSIPRVLEEMQQQGVRKLLILPLYPQYSASTTASTFDAISKDFTRRRWLPDFRFISHYHDFPPYIEAMARHIESHWAEHGRKEKLILSYHGVPLKYLLKGDPYHCECHKTSRLLAERLGLGKDQYMTTFQSRFGREEWLQPYTDETLKALPGKGVKSIDVFCPGFSADCLETIEEINEENREYFMESGGEGFSYIPCLNATPGHIDALVQLVEDNLQGWDIPENTPESLEQRATLAEERKQATFPGRSDI</sequence>
<evidence type="ECO:0000255" key="1">
    <source>
        <dbReference type="HAMAP-Rule" id="MF_00323"/>
    </source>
</evidence>
<comment type="function">
    <text evidence="1">Catalyzes the ferrous insertion into protoporphyrin IX.</text>
</comment>
<comment type="catalytic activity">
    <reaction evidence="1">
        <text>heme b + 2 H(+) = protoporphyrin IX + Fe(2+)</text>
        <dbReference type="Rhea" id="RHEA:22584"/>
        <dbReference type="ChEBI" id="CHEBI:15378"/>
        <dbReference type="ChEBI" id="CHEBI:29033"/>
        <dbReference type="ChEBI" id="CHEBI:57306"/>
        <dbReference type="ChEBI" id="CHEBI:60344"/>
        <dbReference type="EC" id="4.98.1.1"/>
    </reaction>
</comment>
<comment type="pathway">
    <text evidence="1">Porphyrin-containing compound metabolism; protoheme biosynthesis; protoheme from protoporphyrin-IX: step 1/1.</text>
</comment>
<comment type="subcellular location">
    <subcellularLocation>
        <location evidence="1">Cytoplasm</location>
    </subcellularLocation>
</comment>
<comment type="similarity">
    <text evidence="1">Belongs to the ferrochelatase family.</text>
</comment>
<gene>
    <name evidence="1" type="primary">hemH</name>
    <name type="ordered locus">Maqu_1496</name>
</gene>
<feature type="chain" id="PRO_1000019318" description="Ferrochelatase">
    <location>
        <begin position="1"/>
        <end position="370"/>
    </location>
</feature>
<feature type="binding site" evidence="1">
    <location>
        <position position="210"/>
    </location>
    <ligand>
        <name>Fe cation</name>
        <dbReference type="ChEBI" id="CHEBI:24875"/>
    </ligand>
</feature>
<feature type="binding site" evidence="1">
    <location>
        <position position="291"/>
    </location>
    <ligand>
        <name>Fe cation</name>
        <dbReference type="ChEBI" id="CHEBI:24875"/>
    </ligand>
</feature>
<dbReference type="EC" id="4.98.1.1" evidence="1"/>
<dbReference type="EMBL" id="CP000514">
    <property type="protein sequence ID" value="ABM18581.1"/>
    <property type="molecule type" value="Genomic_DNA"/>
</dbReference>
<dbReference type="RefSeq" id="WP_011784983.1">
    <property type="nucleotide sequence ID" value="NC_008740.1"/>
</dbReference>
<dbReference type="SMR" id="A1U0R2"/>
<dbReference type="STRING" id="351348.Maqu_1496"/>
<dbReference type="KEGG" id="maq:Maqu_1496"/>
<dbReference type="eggNOG" id="COG0276">
    <property type="taxonomic scope" value="Bacteria"/>
</dbReference>
<dbReference type="HOGENOM" id="CLU_018884_0_0_6"/>
<dbReference type="OrthoDB" id="9809741at2"/>
<dbReference type="UniPathway" id="UPA00252">
    <property type="reaction ID" value="UER00325"/>
</dbReference>
<dbReference type="Proteomes" id="UP000000998">
    <property type="component" value="Chromosome"/>
</dbReference>
<dbReference type="GO" id="GO:0005737">
    <property type="term" value="C:cytoplasm"/>
    <property type="evidence" value="ECO:0007669"/>
    <property type="project" value="UniProtKB-SubCell"/>
</dbReference>
<dbReference type="GO" id="GO:0004325">
    <property type="term" value="F:ferrochelatase activity"/>
    <property type="evidence" value="ECO:0007669"/>
    <property type="project" value="UniProtKB-UniRule"/>
</dbReference>
<dbReference type="GO" id="GO:0046872">
    <property type="term" value="F:metal ion binding"/>
    <property type="evidence" value="ECO:0007669"/>
    <property type="project" value="UniProtKB-KW"/>
</dbReference>
<dbReference type="GO" id="GO:0006783">
    <property type="term" value="P:heme biosynthetic process"/>
    <property type="evidence" value="ECO:0007669"/>
    <property type="project" value="UniProtKB-UniRule"/>
</dbReference>
<dbReference type="CDD" id="cd00419">
    <property type="entry name" value="Ferrochelatase_C"/>
    <property type="match status" value="1"/>
</dbReference>
<dbReference type="CDD" id="cd03411">
    <property type="entry name" value="Ferrochelatase_N"/>
    <property type="match status" value="1"/>
</dbReference>
<dbReference type="FunFam" id="3.40.50.1400:FF:000002">
    <property type="entry name" value="Ferrochelatase"/>
    <property type="match status" value="1"/>
</dbReference>
<dbReference type="Gene3D" id="3.40.50.1400">
    <property type="match status" value="2"/>
</dbReference>
<dbReference type="HAMAP" id="MF_00323">
    <property type="entry name" value="Ferrochelatase"/>
    <property type="match status" value="1"/>
</dbReference>
<dbReference type="InterPro" id="IPR001015">
    <property type="entry name" value="Ferrochelatase"/>
</dbReference>
<dbReference type="InterPro" id="IPR019772">
    <property type="entry name" value="Ferrochelatase_AS"/>
</dbReference>
<dbReference type="InterPro" id="IPR033644">
    <property type="entry name" value="Ferrochelatase_C"/>
</dbReference>
<dbReference type="InterPro" id="IPR033659">
    <property type="entry name" value="Ferrochelatase_N"/>
</dbReference>
<dbReference type="NCBIfam" id="TIGR00109">
    <property type="entry name" value="hemH"/>
    <property type="match status" value="1"/>
</dbReference>
<dbReference type="PANTHER" id="PTHR11108">
    <property type="entry name" value="FERROCHELATASE"/>
    <property type="match status" value="1"/>
</dbReference>
<dbReference type="PANTHER" id="PTHR11108:SF1">
    <property type="entry name" value="FERROCHELATASE, MITOCHONDRIAL"/>
    <property type="match status" value="1"/>
</dbReference>
<dbReference type="Pfam" id="PF00762">
    <property type="entry name" value="Ferrochelatase"/>
    <property type="match status" value="1"/>
</dbReference>
<dbReference type="SUPFAM" id="SSF53800">
    <property type="entry name" value="Chelatase"/>
    <property type="match status" value="1"/>
</dbReference>
<dbReference type="PROSITE" id="PS00534">
    <property type="entry name" value="FERROCHELATASE"/>
    <property type="match status" value="1"/>
</dbReference>
<protein>
    <recommendedName>
        <fullName evidence="1">Ferrochelatase</fullName>
        <ecNumber evidence="1">4.98.1.1</ecNumber>
    </recommendedName>
    <alternativeName>
        <fullName evidence="1">Heme synthase</fullName>
    </alternativeName>
    <alternativeName>
        <fullName evidence="1">Protoheme ferro-lyase</fullName>
    </alternativeName>
</protein>
<accession>A1U0R2</accession>